<protein>
    <recommendedName>
        <fullName evidence="5">Probable histidine kinase 2</fullName>
        <shortName evidence="5">OsHK2</shortName>
        <ecNumber evidence="5">2.7.13.3</ecNumber>
    </recommendedName>
</protein>
<gene>
    <name evidence="5" type="primary">HK2</name>
    <name evidence="5" type="synonym">OHK1</name>
    <name evidence="6" type="ORF">OsI_21926</name>
</gene>
<name>OHK2_ORYSI</name>
<evidence type="ECO:0000250" key="1">
    <source>
        <dbReference type="UniProtKB" id="A1A698"/>
    </source>
</evidence>
<evidence type="ECO:0000255" key="2"/>
<evidence type="ECO:0000255" key="3">
    <source>
        <dbReference type="PROSITE-ProRule" id="PRU00107"/>
    </source>
</evidence>
<evidence type="ECO:0000255" key="4">
    <source>
        <dbReference type="PROSITE-ProRule" id="PRU00169"/>
    </source>
</evidence>
<evidence type="ECO:0000305" key="5"/>
<evidence type="ECO:0000312" key="6">
    <source>
        <dbReference type="EMBL" id="EAY99925.1"/>
    </source>
</evidence>
<feature type="chain" id="PRO_0000433806" description="Probable histidine kinase 2">
    <location>
        <begin position="1"/>
        <end position="1048"/>
    </location>
</feature>
<feature type="topological domain" description="Cytoplasmic" evidence="5">
    <location>
        <begin position="1"/>
        <end position="16"/>
    </location>
</feature>
<feature type="transmembrane region" description="Helical" evidence="2">
    <location>
        <begin position="17"/>
        <end position="37"/>
    </location>
</feature>
<feature type="topological domain" description="Extracellular" evidence="5">
    <location>
        <begin position="38"/>
        <end position="336"/>
    </location>
</feature>
<feature type="transmembrane region" description="Helical" evidence="2">
    <location>
        <begin position="337"/>
        <end position="357"/>
    </location>
</feature>
<feature type="topological domain" description="Cytoplasmic" evidence="5">
    <location>
        <begin position="358"/>
        <end position="1048"/>
    </location>
</feature>
<feature type="domain" description="Histidine kinase" evidence="3">
    <location>
        <begin position="398"/>
        <end position="662"/>
    </location>
</feature>
<feature type="domain" description="Response regulatory" evidence="4">
    <location>
        <begin position="912"/>
        <end position="1044"/>
    </location>
</feature>
<feature type="modified residue" description="Phosphohistidine; by autocatalysis" evidence="3">
    <location>
        <position position="401"/>
    </location>
</feature>
<feature type="modified residue" description="4-aspartylphosphate" evidence="4">
    <location>
        <position position="975"/>
    </location>
</feature>
<accession>A2YA15</accession>
<proteinExistence type="inferred from homology"/>
<sequence length="1048" mass="114674">MREVEEVSKWRRRCCYFWILFPLAVIATCMTITVVTFCSSTMYMTEVMGEATKGAMDSALMHIAGNMRPLLEANRSVFTIANTLHVQGNMASFSHVGPKLFLAFSMQPLQAQISYAAVDGAAFAYYRAGGGDGEARAMFARPNGTWFTQAVDPATGRPVGNATAAAPHQQLPPNVTRLLLDGGGGGASLADGWARPGVRMLFLSAPVGGGGGAVSAAVAVDDVVLRGAAGLRQLRDLGMYYAVAGNGGATAAPPAPEPAAYRSLLGDGAAAEEMALFSSVKCTASAIDAPPKLDVHGVKSDKYRFACTNFDISGVQMGFRVVLRKSAMVGVFRRGGVTMVAVACAAAAAATVACVLMARALRRAVAREAALGADLARHRDALRQAERKSMNKSNAFASASHDIRSALAAVAGLVEVSRPEANPNIVDNLNQMELCTNKLLDILNSILDTTKVESGKVQLEEVEFNMADVLEESVDMANVVGITKGIEVIWDPCDFSVMKCDNIIGDSKRFKQILDNLLGNAMKFTQEGHVILRAWANRPIARGSIGAPSRFAYRSLENNFFSFFFGAKEDRVSQNSFNPLQNDPNSVEFYFEVVDTGIGIPKEKRESVFENYVQVKEGHGGTGLGLGIVQSFVRLMGGEISIKEKEPGERGTCFGFNVLLKTSGNQAAEEDIEEGPSTVSELDIRASVFRETNCFKGWHCILFVHGDETRRVLQAWMESIGMKVWMVPGVESISSTLEKARSSRDDCDVDRCFSSKEMVSQVLPTTLRNNNIMARNLGEHHPLGMLLIVDVSNGQLENIQRQARDFTQMRSQVPCKFVCLTDLRTSYKDFRRFEEMSCDLILRKPVHGSRLYSLLMTLRDVQSSPMHRSSLVGHENYVTRHQDSANIVALAEVGRLDQGLKTEEDRPLDGMHVLLVEDTLVLQTIQRKMLNQLGAIVELAGDGAKAVDMFRDAIERASVSEEHSVPLPYDVIFMDCQMPRMDGYEATRRIREEESRYGIRTPIIALTAHSMEDDLQKAIDVGMDLHMTKPIERRRIVEAVHGVCKGKN</sequence>
<reference key="1">
    <citation type="journal article" date="2005" name="PLoS Biol.">
        <title>The genomes of Oryza sativa: a history of duplications.</title>
        <authorList>
            <person name="Yu J."/>
            <person name="Wang J."/>
            <person name="Lin W."/>
            <person name="Li S."/>
            <person name="Li H."/>
            <person name="Zhou J."/>
            <person name="Ni P."/>
            <person name="Dong W."/>
            <person name="Hu S."/>
            <person name="Zeng C."/>
            <person name="Zhang J."/>
            <person name="Zhang Y."/>
            <person name="Li R."/>
            <person name="Xu Z."/>
            <person name="Li S."/>
            <person name="Li X."/>
            <person name="Zheng H."/>
            <person name="Cong L."/>
            <person name="Lin L."/>
            <person name="Yin J."/>
            <person name="Geng J."/>
            <person name="Li G."/>
            <person name="Shi J."/>
            <person name="Liu J."/>
            <person name="Lv H."/>
            <person name="Li J."/>
            <person name="Wang J."/>
            <person name="Deng Y."/>
            <person name="Ran L."/>
            <person name="Shi X."/>
            <person name="Wang X."/>
            <person name="Wu Q."/>
            <person name="Li C."/>
            <person name="Ren X."/>
            <person name="Wang J."/>
            <person name="Wang X."/>
            <person name="Li D."/>
            <person name="Liu D."/>
            <person name="Zhang X."/>
            <person name="Ji Z."/>
            <person name="Zhao W."/>
            <person name="Sun Y."/>
            <person name="Zhang Z."/>
            <person name="Bao J."/>
            <person name="Han Y."/>
            <person name="Dong L."/>
            <person name="Ji J."/>
            <person name="Chen P."/>
            <person name="Wu S."/>
            <person name="Liu J."/>
            <person name="Xiao Y."/>
            <person name="Bu D."/>
            <person name="Tan J."/>
            <person name="Yang L."/>
            <person name="Ye C."/>
            <person name="Zhang J."/>
            <person name="Xu J."/>
            <person name="Zhou Y."/>
            <person name="Yu Y."/>
            <person name="Zhang B."/>
            <person name="Zhuang S."/>
            <person name="Wei H."/>
            <person name="Liu B."/>
            <person name="Lei M."/>
            <person name="Yu H."/>
            <person name="Li Y."/>
            <person name="Xu H."/>
            <person name="Wei S."/>
            <person name="He X."/>
            <person name="Fang L."/>
            <person name="Zhang Z."/>
            <person name="Zhang Y."/>
            <person name="Huang X."/>
            <person name="Su Z."/>
            <person name="Tong W."/>
            <person name="Li J."/>
            <person name="Tong Z."/>
            <person name="Li S."/>
            <person name="Ye J."/>
            <person name="Wang L."/>
            <person name="Fang L."/>
            <person name="Lei T."/>
            <person name="Chen C.-S."/>
            <person name="Chen H.-C."/>
            <person name="Xu Z."/>
            <person name="Li H."/>
            <person name="Huang H."/>
            <person name="Zhang F."/>
            <person name="Xu H."/>
            <person name="Li N."/>
            <person name="Zhao C."/>
            <person name="Li S."/>
            <person name="Dong L."/>
            <person name="Huang Y."/>
            <person name="Li L."/>
            <person name="Xi Y."/>
            <person name="Qi Q."/>
            <person name="Li W."/>
            <person name="Zhang B."/>
            <person name="Hu W."/>
            <person name="Zhang Y."/>
            <person name="Tian X."/>
            <person name="Jiao Y."/>
            <person name="Liang X."/>
            <person name="Jin J."/>
            <person name="Gao L."/>
            <person name="Zheng W."/>
            <person name="Hao B."/>
            <person name="Liu S.-M."/>
            <person name="Wang W."/>
            <person name="Yuan L."/>
            <person name="Cao M."/>
            <person name="McDermott J."/>
            <person name="Samudrala R."/>
            <person name="Wang J."/>
            <person name="Wong G.K.-S."/>
            <person name="Yang H."/>
        </authorList>
    </citation>
    <scope>NUCLEOTIDE SEQUENCE [LARGE SCALE GENOMIC DNA]</scope>
    <source>
        <strain>cv. 93-11</strain>
    </source>
</reference>
<organism>
    <name type="scientific">Oryza sativa subsp. indica</name>
    <name type="common">Rice</name>
    <dbReference type="NCBI Taxonomy" id="39946"/>
    <lineage>
        <taxon>Eukaryota</taxon>
        <taxon>Viridiplantae</taxon>
        <taxon>Streptophyta</taxon>
        <taxon>Embryophyta</taxon>
        <taxon>Tracheophyta</taxon>
        <taxon>Spermatophyta</taxon>
        <taxon>Magnoliopsida</taxon>
        <taxon>Liliopsida</taxon>
        <taxon>Poales</taxon>
        <taxon>Poaceae</taxon>
        <taxon>BOP clade</taxon>
        <taxon>Oryzoideae</taxon>
        <taxon>Oryzeae</taxon>
        <taxon>Oryzinae</taxon>
        <taxon>Oryza</taxon>
        <taxon>Oryza sativa</taxon>
    </lineage>
</organism>
<comment type="function">
    <text evidence="1">Cytokinin receptor related to bacterial two-component regulators. Functions as a histidine kinase and transmits the stress signal to a downstream MAPK cascade.</text>
</comment>
<comment type="catalytic activity">
    <reaction evidence="5">
        <text>ATP + protein L-histidine = ADP + protein N-phospho-L-histidine.</text>
        <dbReference type="EC" id="2.7.13.3"/>
    </reaction>
</comment>
<comment type="subcellular location">
    <subcellularLocation>
        <location evidence="5">Cell membrane</location>
        <topology evidence="2">Multi-pass membrane protein</topology>
    </subcellularLocation>
</comment>
<comment type="domain">
    <text evidence="5">Histidine-containing phosphotransfer domain (HPt) contains an active histidine that mediates the phosphotransfer.</text>
</comment>
<comment type="PTM">
    <text evidence="5">Activation probably requires a transfer of a phosphate group between a His in the transmitter domain and an Asp of the receiver domain.</text>
</comment>
<keyword id="KW-1003">Cell membrane</keyword>
<keyword id="KW-0932">Cytokinin signaling pathway</keyword>
<keyword id="KW-0418">Kinase</keyword>
<keyword id="KW-0472">Membrane</keyword>
<keyword id="KW-0597">Phosphoprotein</keyword>
<keyword id="KW-1185">Reference proteome</keyword>
<keyword id="KW-0808">Transferase</keyword>
<keyword id="KW-0812">Transmembrane</keyword>
<keyword id="KW-1133">Transmembrane helix</keyword>
<keyword id="KW-0902">Two-component regulatory system</keyword>
<dbReference type="EC" id="2.7.13.3" evidence="5"/>
<dbReference type="EMBL" id="CM000131">
    <property type="protein sequence ID" value="EAY99925.1"/>
    <property type="molecule type" value="Genomic_DNA"/>
</dbReference>
<dbReference type="SMR" id="A2YA15"/>
<dbReference type="STRING" id="39946.A2YA15"/>
<dbReference type="EnsemblPlants" id="BGIOSGA021781-TA">
    <property type="protein sequence ID" value="BGIOSGA021781-PA"/>
    <property type="gene ID" value="BGIOSGA021781"/>
</dbReference>
<dbReference type="Gramene" id="BGIOSGA021781-TA">
    <property type="protein sequence ID" value="BGIOSGA021781-PA"/>
    <property type="gene ID" value="BGIOSGA021781"/>
</dbReference>
<dbReference type="HOGENOM" id="CLU_000445_104_16_1"/>
<dbReference type="OMA" id="HCILYVH"/>
<dbReference type="Proteomes" id="UP000007015">
    <property type="component" value="Chromosome 6"/>
</dbReference>
<dbReference type="GO" id="GO:0005886">
    <property type="term" value="C:plasma membrane"/>
    <property type="evidence" value="ECO:0007669"/>
    <property type="project" value="UniProtKB-SubCell"/>
</dbReference>
<dbReference type="GO" id="GO:0000155">
    <property type="term" value="F:phosphorelay sensor kinase activity"/>
    <property type="evidence" value="ECO:0007669"/>
    <property type="project" value="InterPro"/>
</dbReference>
<dbReference type="GO" id="GO:0009736">
    <property type="term" value="P:cytokinin-activated signaling pathway"/>
    <property type="evidence" value="ECO:0007669"/>
    <property type="project" value="UniProtKB-KW"/>
</dbReference>
<dbReference type="CDD" id="cd00082">
    <property type="entry name" value="HisKA"/>
    <property type="match status" value="1"/>
</dbReference>
<dbReference type="CDD" id="cd17546">
    <property type="entry name" value="REC_hyHK_CKI1_RcsC-like"/>
    <property type="match status" value="1"/>
</dbReference>
<dbReference type="FunFam" id="3.40.50.2300:FF:000367">
    <property type="entry name" value="Histidine kinase 1"/>
    <property type="match status" value="1"/>
</dbReference>
<dbReference type="Gene3D" id="1.10.287.130">
    <property type="match status" value="1"/>
</dbReference>
<dbReference type="Gene3D" id="3.40.50.2300">
    <property type="match status" value="1"/>
</dbReference>
<dbReference type="Gene3D" id="3.30.565.10">
    <property type="entry name" value="Histidine kinase-like ATPase, C-terminal domain"/>
    <property type="match status" value="1"/>
</dbReference>
<dbReference type="InterPro" id="IPR050956">
    <property type="entry name" value="2C_system_His_kinase"/>
</dbReference>
<dbReference type="InterPro" id="IPR011006">
    <property type="entry name" value="CheY-like_superfamily"/>
</dbReference>
<dbReference type="InterPro" id="IPR036890">
    <property type="entry name" value="HATPase_C_sf"/>
</dbReference>
<dbReference type="InterPro" id="IPR005467">
    <property type="entry name" value="His_kinase_dom"/>
</dbReference>
<dbReference type="InterPro" id="IPR003661">
    <property type="entry name" value="HisK_dim/P_dom"/>
</dbReference>
<dbReference type="InterPro" id="IPR036097">
    <property type="entry name" value="HisK_dim/P_sf"/>
</dbReference>
<dbReference type="InterPro" id="IPR004358">
    <property type="entry name" value="Sig_transdc_His_kin-like_C"/>
</dbReference>
<dbReference type="InterPro" id="IPR001789">
    <property type="entry name" value="Sig_transdc_resp-reg_receiver"/>
</dbReference>
<dbReference type="PANTHER" id="PTHR43719:SF75">
    <property type="entry name" value="HISTIDINE KINASE CKI1"/>
    <property type="match status" value="1"/>
</dbReference>
<dbReference type="PANTHER" id="PTHR43719">
    <property type="entry name" value="TWO-COMPONENT HISTIDINE KINASE"/>
    <property type="match status" value="1"/>
</dbReference>
<dbReference type="Pfam" id="PF02518">
    <property type="entry name" value="HATPase_c"/>
    <property type="match status" value="1"/>
</dbReference>
<dbReference type="Pfam" id="PF00512">
    <property type="entry name" value="HisKA"/>
    <property type="match status" value="1"/>
</dbReference>
<dbReference type="Pfam" id="PF00072">
    <property type="entry name" value="Response_reg"/>
    <property type="match status" value="1"/>
</dbReference>
<dbReference type="PRINTS" id="PR00344">
    <property type="entry name" value="BCTRLSENSOR"/>
</dbReference>
<dbReference type="SMART" id="SM00387">
    <property type="entry name" value="HATPase_c"/>
    <property type="match status" value="1"/>
</dbReference>
<dbReference type="SMART" id="SM00388">
    <property type="entry name" value="HisKA"/>
    <property type="match status" value="1"/>
</dbReference>
<dbReference type="SMART" id="SM00448">
    <property type="entry name" value="REC"/>
    <property type="match status" value="1"/>
</dbReference>
<dbReference type="SUPFAM" id="SSF55874">
    <property type="entry name" value="ATPase domain of HSP90 chaperone/DNA topoisomerase II/histidine kinase"/>
    <property type="match status" value="1"/>
</dbReference>
<dbReference type="SUPFAM" id="SSF52172">
    <property type="entry name" value="CheY-like"/>
    <property type="match status" value="1"/>
</dbReference>
<dbReference type="SUPFAM" id="SSF47384">
    <property type="entry name" value="Homodimeric domain of signal transducing histidine kinase"/>
    <property type="match status" value="1"/>
</dbReference>
<dbReference type="PROSITE" id="PS50109">
    <property type="entry name" value="HIS_KIN"/>
    <property type="match status" value="1"/>
</dbReference>
<dbReference type="PROSITE" id="PS50110">
    <property type="entry name" value="RESPONSE_REGULATORY"/>
    <property type="match status" value="1"/>
</dbReference>